<protein>
    <recommendedName>
        <fullName evidence="1">Malate dehydrogenase</fullName>
        <ecNumber evidence="1">1.1.1.37</ecNumber>
    </recommendedName>
</protein>
<gene>
    <name evidence="1" type="primary">mdh</name>
</gene>
<proteinExistence type="inferred from homology"/>
<keyword id="KW-0520">NAD</keyword>
<keyword id="KW-0560">Oxidoreductase</keyword>
<keyword id="KW-0597">Phosphoprotein</keyword>
<keyword id="KW-0816">Tricarboxylic acid cycle</keyword>
<sequence>MAMKRKKISVIGAGFTGATTAFLLAQKELGDIVLVDIPQLENPTKGKALDMLESSPVLGFDANIVGTSDYADTADSDIVVITAGIARKPGMSRDDLVTTNQKIMKQVTKEVVKYSPNCYIIVLTNPVDAMSYTVFKESGFPKNRVIGQSGVLDTARFRTFVAQELNISVKDVTGFVLGGHGDDMVPLVRYSYAGGIPLEKLIPKDRLDAIVERTRKGGGEIVNLLGNGSAYYAPAASLAEMVEAIVKDQRRILPAITYLEGEYGYEGIYLGVPTILGGNGIEKVIELELTEDEKAALAKSLESVKNVMRVLE</sequence>
<accession>Q9X4K8</accession>
<name>MDH_GEOTD</name>
<feature type="chain" id="PRO_0000113435" description="Malate dehydrogenase">
    <location>
        <begin position="1"/>
        <end position="312"/>
    </location>
</feature>
<feature type="active site" description="Proton acceptor" evidence="1">
    <location>
        <position position="180"/>
    </location>
</feature>
<feature type="binding site" evidence="1">
    <location>
        <begin position="12"/>
        <end position="17"/>
    </location>
    <ligand>
        <name>NAD(+)</name>
        <dbReference type="ChEBI" id="CHEBI:57540"/>
    </ligand>
</feature>
<feature type="binding site" evidence="1">
    <location>
        <position position="36"/>
    </location>
    <ligand>
        <name>NAD(+)</name>
        <dbReference type="ChEBI" id="CHEBI:57540"/>
    </ligand>
</feature>
<feature type="binding site" evidence="1">
    <location>
        <position position="87"/>
    </location>
    <ligand>
        <name>substrate</name>
    </ligand>
</feature>
<feature type="binding site" evidence="1">
    <location>
        <position position="93"/>
    </location>
    <ligand>
        <name>substrate</name>
    </ligand>
</feature>
<feature type="binding site" evidence="1">
    <location>
        <position position="100"/>
    </location>
    <ligand>
        <name>NAD(+)</name>
        <dbReference type="ChEBI" id="CHEBI:57540"/>
    </ligand>
</feature>
<feature type="binding site" evidence="1">
    <location>
        <begin position="123"/>
        <end position="125"/>
    </location>
    <ligand>
        <name>NAD(+)</name>
        <dbReference type="ChEBI" id="CHEBI:57540"/>
    </ligand>
</feature>
<feature type="binding site" evidence="1">
    <location>
        <position position="125"/>
    </location>
    <ligand>
        <name>substrate</name>
    </ligand>
</feature>
<feature type="binding site" evidence="1">
    <location>
        <position position="156"/>
    </location>
    <ligand>
        <name>substrate</name>
    </ligand>
</feature>
<feature type="modified residue" description="Phosphoserine" evidence="1">
    <location>
        <position position="149"/>
    </location>
</feature>
<organism>
    <name type="scientific">Geobacillus thermodenitrificans</name>
    <dbReference type="NCBI Taxonomy" id="33940"/>
    <lineage>
        <taxon>Bacteria</taxon>
        <taxon>Bacillati</taxon>
        <taxon>Bacillota</taxon>
        <taxon>Bacilli</taxon>
        <taxon>Bacillales</taxon>
        <taxon>Anoxybacillaceae</taxon>
        <taxon>Geobacillus</taxon>
    </lineage>
</organism>
<evidence type="ECO:0000255" key="1">
    <source>
        <dbReference type="HAMAP-Rule" id="MF_00487"/>
    </source>
</evidence>
<comment type="function">
    <text evidence="1">Catalyzes the reversible oxidation of malate to oxaloacetate.</text>
</comment>
<comment type="catalytic activity">
    <reaction evidence="1">
        <text>(S)-malate + NAD(+) = oxaloacetate + NADH + H(+)</text>
        <dbReference type="Rhea" id="RHEA:21432"/>
        <dbReference type="ChEBI" id="CHEBI:15378"/>
        <dbReference type="ChEBI" id="CHEBI:15589"/>
        <dbReference type="ChEBI" id="CHEBI:16452"/>
        <dbReference type="ChEBI" id="CHEBI:57540"/>
        <dbReference type="ChEBI" id="CHEBI:57945"/>
        <dbReference type="EC" id="1.1.1.37"/>
    </reaction>
</comment>
<comment type="similarity">
    <text evidence="1">Belongs to the LDH/MDH superfamily. MDH type 3 family.</text>
</comment>
<dbReference type="EC" id="1.1.1.37" evidence="1"/>
<dbReference type="EMBL" id="AF114423">
    <property type="protein sequence ID" value="AAD28555.1"/>
    <property type="molecule type" value="Genomic_DNA"/>
</dbReference>
<dbReference type="SMR" id="Q9X4K8"/>
<dbReference type="STRING" id="33940.GTHT12_02228"/>
<dbReference type="GO" id="GO:0004459">
    <property type="term" value="F:L-lactate dehydrogenase activity"/>
    <property type="evidence" value="ECO:0007669"/>
    <property type="project" value="TreeGrafter"/>
</dbReference>
<dbReference type="GO" id="GO:0030060">
    <property type="term" value="F:L-malate dehydrogenase (NAD+) activity"/>
    <property type="evidence" value="ECO:0007669"/>
    <property type="project" value="UniProtKB-UniRule"/>
</dbReference>
<dbReference type="GO" id="GO:0006089">
    <property type="term" value="P:lactate metabolic process"/>
    <property type="evidence" value="ECO:0007669"/>
    <property type="project" value="TreeGrafter"/>
</dbReference>
<dbReference type="GO" id="GO:0006099">
    <property type="term" value="P:tricarboxylic acid cycle"/>
    <property type="evidence" value="ECO:0007669"/>
    <property type="project" value="UniProtKB-UniRule"/>
</dbReference>
<dbReference type="CDD" id="cd01339">
    <property type="entry name" value="LDH-like_MDH"/>
    <property type="match status" value="1"/>
</dbReference>
<dbReference type="FunFam" id="3.40.50.720:FF:000018">
    <property type="entry name" value="Malate dehydrogenase"/>
    <property type="match status" value="1"/>
</dbReference>
<dbReference type="FunFam" id="3.90.110.10:FF:000004">
    <property type="entry name" value="Malate dehydrogenase"/>
    <property type="match status" value="1"/>
</dbReference>
<dbReference type="Gene3D" id="3.90.110.10">
    <property type="entry name" value="Lactate dehydrogenase/glycoside hydrolase, family 4, C-terminal"/>
    <property type="match status" value="1"/>
</dbReference>
<dbReference type="Gene3D" id="3.40.50.720">
    <property type="entry name" value="NAD(P)-binding Rossmann-like Domain"/>
    <property type="match status" value="1"/>
</dbReference>
<dbReference type="HAMAP" id="MF_00487">
    <property type="entry name" value="Malate_dehydrog_3"/>
    <property type="match status" value="1"/>
</dbReference>
<dbReference type="InterPro" id="IPR001557">
    <property type="entry name" value="L-lactate/malate_DH"/>
</dbReference>
<dbReference type="InterPro" id="IPR022383">
    <property type="entry name" value="Lactate/malate_DH_C"/>
</dbReference>
<dbReference type="InterPro" id="IPR001236">
    <property type="entry name" value="Lactate/malate_DH_N"/>
</dbReference>
<dbReference type="InterPro" id="IPR015955">
    <property type="entry name" value="Lactate_DH/Glyco_Ohase_4_C"/>
</dbReference>
<dbReference type="InterPro" id="IPR011275">
    <property type="entry name" value="Malate_DH_type3"/>
</dbReference>
<dbReference type="InterPro" id="IPR036291">
    <property type="entry name" value="NAD(P)-bd_dom_sf"/>
</dbReference>
<dbReference type="NCBIfam" id="TIGR01763">
    <property type="entry name" value="MalateDH_bact"/>
    <property type="match status" value="1"/>
</dbReference>
<dbReference type="NCBIfam" id="NF004863">
    <property type="entry name" value="PRK06223.1"/>
    <property type="match status" value="1"/>
</dbReference>
<dbReference type="PANTHER" id="PTHR43128">
    <property type="entry name" value="L-2-HYDROXYCARBOXYLATE DEHYDROGENASE (NAD(P)(+))"/>
    <property type="match status" value="1"/>
</dbReference>
<dbReference type="PANTHER" id="PTHR43128:SF16">
    <property type="entry name" value="L-LACTATE DEHYDROGENASE"/>
    <property type="match status" value="1"/>
</dbReference>
<dbReference type="Pfam" id="PF02866">
    <property type="entry name" value="Ldh_1_C"/>
    <property type="match status" value="1"/>
</dbReference>
<dbReference type="Pfam" id="PF00056">
    <property type="entry name" value="Ldh_1_N"/>
    <property type="match status" value="1"/>
</dbReference>
<dbReference type="PIRSF" id="PIRSF000102">
    <property type="entry name" value="Lac_mal_DH"/>
    <property type="match status" value="1"/>
</dbReference>
<dbReference type="PRINTS" id="PR00086">
    <property type="entry name" value="LLDHDRGNASE"/>
</dbReference>
<dbReference type="SUPFAM" id="SSF56327">
    <property type="entry name" value="LDH C-terminal domain-like"/>
    <property type="match status" value="1"/>
</dbReference>
<dbReference type="SUPFAM" id="SSF51735">
    <property type="entry name" value="NAD(P)-binding Rossmann-fold domains"/>
    <property type="match status" value="1"/>
</dbReference>
<reference key="1">
    <citation type="submission" date="1998-12" db="EMBL/GenBank/DDBJ databases">
        <title>Properties and primary structure of a thermostable L-malate dehydrogenase from 'Bacillus thermodenitrificans'.</title>
        <authorList>
            <person name="Williams R.A.D."/>
            <person name="Welch S.G."/>
            <person name="Alawadhi S.A."/>
        </authorList>
    </citation>
    <scope>NUCLEOTIDE SEQUENCE [GENOMIC DNA]</scope>
    <source>
        <strain>00462</strain>
    </source>
</reference>